<protein>
    <recommendedName>
        <fullName evidence="1">Imidazolonepropionase</fullName>
        <ecNumber evidence="1">3.5.2.7</ecNumber>
    </recommendedName>
    <alternativeName>
        <fullName evidence="1">Imidazolone-5-propionate hydrolase</fullName>
    </alternativeName>
</protein>
<sequence length="414" mass="43833">MSHQLFRNTRIYSPMDSGQPSAGKAQGKLAHFPNGALLVADGLIVAMGDEEAVLAVAKGGAEVEEVDCGGRCMIPGFVDPHTHMCFAAPREAEFAQRIAGTSYLQILSEGGGILSSVRAVALAGEDELYKSTLHRVQTALSFGTTSLEIKSGYGLDTDNELKMLRVIGRVAVDSCLDIVATFLGAHAIPGQYKTDADAFITMIVEEMLPRVREQGIARFCDVFCERGVFSIEQSRILLKAARAMGLGLKIHADEVTDLGGAGLAAELGACSADHLLAASDTNIRAMSQAGVIATLLPATAYSLRKDYARARVMIENRVAVALATDCNPGSSFTESMQFVIGLAVLNMEMTPAEALTGASLNSAYALNMADRVGSLDRGKQADFLLLEGETPAVLAYHAGVSSVASVYKRGEKVH</sequence>
<reference key="1">
    <citation type="journal article" date="2004" name="Environ. Microbiol.">
        <title>The genome of Desulfotalea psychrophila, a sulfate-reducing bacterium from permanently cold Arctic sediments.</title>
        <authorList>
            <person name="Rabus R."/>
            <person name="Ruepp A."/>
            <person name="Frickey T."/>
            <person name="Rattei T."/>
            <person name="Fartmann B."/>
            <person name="Stark M."/>
            <person name="Bauer M."/>
            <person name="Zibat A."/>
            <person name="Lombardot T."/>
            <person name="Becker I."/>
            <person name="Amann J."/>
            <person name="Gellner K."/>
            <person name="Teeling H."/>
            <person name="Leuschner W.D."/>
            <person name="Gloeckner F.-O."/>
            <person name="Lupas A.N."/>
            <person name="Amann R."/>
            <person name="Klenk H.-P."/>
        </authorList>
    </citation>
    <scope>NUCLEOTIDE SEQUENCE [LARGE SCALE GENOMIC DNA]</scope>
    <source>
        <strain>DSM 12343 / LSv54</strain>
    </source>
</reference>
<gene>
    <name evidence="1" type="primary">hutI</name>
    <name type="ordered locus">DP2351</name>
</gene>
<keyword id="KW-0963">Cytoplasm</keyword>
<keyword id="KW-0369">Histidine metabolism</keyword>
<keyword id="KW-0378">Hydrolase</keyword>
<keyword id="KW-0408">Iron</keyword>
<keyword id="KW-0479">Metal-binding</keyword>
<keyword id="KW-1185">Reference proteome</keyword>
<keyword id="KW-0862">Zinc</keyword>
<comment type="function">
    <text evidence="1">Catalyzes the hydrolytic cleavage of the carbon-nitrogen bond in imidazolone-5-propanoate to yield N-formimidoyl-L-glutamate. It is the third step in the universal histidine degradation pathway.</text>
</comment>
<comment type="catalytic activity">
    <reaction evidence="1">
        <text>4-imidazolone-5-propanoate + H2O = N-formimidoyl-L-glutamate</text>
        <dbReference type="Rhea" id="RHEA:23660"/>
        <dbReference type="ChEBI" id="CHEBI:15377"/>
        <dbReference type="ChEBI" id="CHEBI:58928"/>
        <dbReference type="ChEBI" id="CHEBI:77893"/>
        <dbReference type="EC" id="3.5.2.7"/>
    </reaction>
</comment>
<comment type="cofactor">
    <cofactor evidence="1">
        <name>Zn(2+)</name>
        <dbReference type="ChEBI" id="CHEBI:29105"/>
    </cofactor>
    <cofactor evidence="1">
        <name>Fe(3+)</name>
        <dbReference type="ChEBI" id="CHEBI:29034"/>
    </cofactor>
    <text evidence="1">Binds 1 zinc or iron ion per subunit.</text>
</comment>
<comment type="pathway">
    <text evidence="1">Amino-acid degradation; L-histidine degradation into L-glutamate; N-formimidoyl-L-glutamate from L-histidine: step 3/3.</text>
</comment>
<comment type="subcellular location">
    <subcellularLocation>
        <location evidence="1">Cytoplasm</location>
    </subcellularLocation>
</comment>
<comment type="similarity">
    <text evidence="1">Belongs to the metallo-dependent hydrolases superfamily. HutI family.</text>
</comment>
<accession>Q6AKP5</accession>
<name>HUTI_DESPS</name>
<evidence type="ECO:0000255" key="1">
    <source>
        <dbReference type="HAMAP-Rule" id="MF_00372"/>
    </source>
</evidence>
<evidence type="ECO:0000256" key="2">
    <source>
        <dbReference type="SAM" id="MobiDB-lite"/>
    </source>
</evidence>
<dbReference type="EC" id="3.5.2.7" evidence="1"/>
<dbReference type="EMBL" id="CR522870">
    <property type="protein sequence ID" value="CAG37080.1"/>
    <property type="molecule type" value="Genomic_DNA"/>
</dbReference>
<dbReference type="RefSeq" id="WP_011189592.1">
    <property type="nucleotide sequence ID" value="NC_006138.1"/>
</dbReference>
<dbReference type="SMR" id="Q6AKP5"/>
<dbReference type="STRING" id="177439.DP2351"/>
<dbReference type="KEGG" id="dps:DP2351"/>
<dbReference type="eggNOG" id="COG1228">
    <property type="taxonomic scope" value="Bacteria"/>
</dbReference>
<dbReference type="HOGENOM" id="CLU_041647_0_1_7"/>
<dbReference type="OrthoDB" id="9807210at2"/>
<dbReference type="UniPathway" id="UPA00379">
    <property type="reaction ID" value="UER00551"/>
</dbReference>
<dbReference type="Proteomes" id="UP000000602">
    <property type="component" value="Chromosome"/>
</dbReference>
<dbReference type="GO" id="GO:0005737">
    <property type="term" value="C:cytoplasm"/>
    <property type="evidence" value="ECO:0007669"/>
    <property type="project" value="UniProtKB-SubCell"/>
</dbReference>
<dbReference type="GO" id="GO:0050480">
    <property type="term" value="F:imidazolonepropionase activity"/>
    <property type="evidence" value="ECO:0007669"/>
    <property type="project" value="UniProtKB-UniRule"/>
</dbReference>
<dbReference type="GO" id="GO:0005506">
    <property type="term" value="F:iron ion binding"/>
    <property type="evidence" value="ECO:0007669"/>
    <property type="project" value="UniProtKB-UniRule"/>
</dbReference>
<dbReference type="GO" id="GO:0008270">
    <property type="term" value="F:zinc ion binding"/>
    <property type="evidence" value="ECO:0007669"/>
    <property type="project" value="UniProtKB-UniRule"/>
</dbReference>
<dbReference type="GO" id="GO:0019556">
    <property type="term" value="P:L-histidine catabolic process to glutamate and formamide"/>
    <property type="evidence" value="ECO:0007669"/>
    <property type="project" value="UniProtKB-UniPathway"/>
</dbReference>
<dbReference type="GO" id="GO:0019557">
    <property type="term" value="P:L-histidine catabolic process to glutamate and formate"/>
    <property type="evidence" value="ECO:0007669"/>
    <property type="project" value="UniProtKB-UniPathway"/>
</dbReference>
<dbReference type="CDD" id="cd01296">
    <property type="entry name" value="Imidazolone-5PH"/>
    <property type="match status" value="1"/>
</dbReference>
<dbReference type="FunFam" id="3.20.20.140:FF:000007">
    <property type="entry name" value="Imidazolonepropionase"/>
    <property type="match status" value="1"/>
</dbReference>
<dbReference type="Gene3D" id="3.20.20.140">
    <property type="entry name" value="Metal-dependent hydrolases"/>
    <property type="match status" value="1"/>
</dbReference>
<dbReference type="Gene3D" id="2.30.40.10">
    <property type="entry name" value="Urease, subunit C, domain 1"/>
    <property type="match status" value="1"/>
</dbReference>
<dbReference type="HAMAP" id="MF_00372">
    <property type="entry name" value="HutI"/>
    <property type="match status" value="1"/>
</dbReference>
<dbReference type="InterPro" id="IPR006680">
    <property type="entry name" value="Amidohydro-rel"/>
</dbReference>
<dbReference type="InterPro" id="IPR005920">
    <property type="entry name" value="HutI"/>
</dbReference>
<dbReference type="InterPro" id="IPR011059">
    <property type="entry name" value="Metal-dep_hydrolase_composite"/>
</dbReference>
<dbReference type="InterPro" id="IPR032466">
    <property type="entry name" value="Metal_Hydrolase"/>
</dbReference>
<dbReference type="NCBIfam" id="TIGR01224">
    <property type="entry name" value="hutI"/>
    <property type="match status" value="1"/>
</dbReference>
<dbReference type="PANTHER" id="PTHR42752">
    <property type="entry name" value="IMIDAZOLONEPROPIONASE"/>
    <property type="match status" value="1"/>
</dbReference>
<dbReference type="PANTHER" id="PTHR42752:SF1">
    <property type="entry name" value="IMIDAZOLONEPROPIONASE-RELATED"/>
    <property type="match status" value="1"/>
</dbReference>
<dbReference type="Pfam" id="PF01979">
    <property type="entry name" value="Amidohydro_1"/>
    <property type="match status" value="1"/>
</dbReference>
<dbReference type="SUPFAM" id="SSF51338">
    <property type="entry name" value="Composite domain of metallo-dependent hydrolases"/>
    <property type="match status" value="1"/>
</dbReference>
<dbReference type="SUPFAM" id="SSF51556">
    <property type="entry name" value="Metallo-dependent hydrolases"/>
    <property type="match status" value="1"/>
</dbReference>
<organism>
    <name type="scientific">Desulfotalea psychrophila (strain LSv54 / DSM 12343)</name>
    <dbReference type="NCBI Taxonomy" id="177439"/>
    <lineage>
        <taxon>Bacteria</taxon>
        <taxon>Pseudomonadati</taxon>
        <taxon>Thermodesulfobacteriota</taxon>
        <taxon>Desulfobulbia</taxon>
        <taxon>Desulfobulbales</taxon>
        <taxon>Desulfocapsaceae</taxon>
        <taxon>Desulfotalea</taxon>
    </lineage>
</organism>
<proteinExistence type="inferred from homology"/>
<feature type="chain" id="PRO_0000306459" description="Imidazolonepropionase">
    <location>
        <begin position="1"/>
        <end position="414"/>
    </location>
</feature>
<feature type="region of interest" description="Disordered" evidence="2">
    <location>
        <begin position="1"/>
        <end position="26"/>
    </location>
</feature>
<feature type="compositionally biased region" description="Polar residues" evidence="2">
    <location>
        <begin position="1"/>
        <end position="20"/>
    </location>
</feature>
<feature type="binding site" evidence="1">
    <location>
        <position position="81"/>
    </location>
    <ligand>
        <name>Fe(3+)</name>
        <dbReference type="ChEBI" id="CHEBI:29034"/>
    </ligand>
</feature>
<feature type="binding site" evidence="1">
    <location>
        <position position="81"/>
    </location>
    <ligand>
        <name>Zn(2+)</name>
        <dbReference type="ChEBI" id="CHEBI:29105"/>
    </ligand>
</feature>
<feature type="binding site" evidence="1">
    <location>
        <position position="83"/>
    </location>
    <ligand>
        <name>Fe(3+)</name>
        <dbReference type="ChEBI" id="CHEBI:29034"/>
    </ligand>
</feature>
<feature type="binding site" evidence="1">
    <location>
        <position position="83"/>
    </location>
    <ligand>
        <name>Zn(2+)</name>
        <dbReference type="ChEBI" id="CHEBI:29105"/>
    </ligand>
</feature>
<feature type="binding site" evidence="1">
    <location>
        <position position="90"/>
    </location>
    <ligand>
        <name>4-imidazolone-5-propanoate</name>
        <dbReference type="ChEBI" id="CHEBI:77893"/>
    </ligand>
</feature>
<feature type="binding site" evidence="1">
    <location>
        <position position="153"/>
    </location>
    <ligand>
        <name>4-imidazolone-5-propanoate</name>
        <dbReference type="ChEBI" id="CHEBI:77893"/>
    </ligand>
</feature>
<feature type="binding site" evidence="1">
    <location>
        <position position="153"/>
    </location>
    <ligand>
        <name>N-formimidoyl-L-glutamate</name>
        <dbReference type="ChEBI" id="CHEBI:58928"/>
    </ligand>
</feature>
<feature type="binding site" evidence="1">
    <location>
        <position position="186"/>
    </location>
    <ligand>
        <name>4-imidazolone-5-propanoate</name>
        <dbReference type="ChEBI" id="CHEBI:77893"/>
    </ligand>
</feature>
<feature type="binding site" evidence="1">
    <location>
        <position position="251"/>
    </location>
    <ligand>
        <name>Fe(3+)</name>
        <dbReference type="ChEBI" id="CHEBI:29034"/>
    </ligand>
</feature>
<feature type="binding site" evidence="1">
    <location>
        <position position="251"/>
    </location>
    <ligand>
        <name>Zn(2+)</name>
        <dbReference type="ChEBI" id="CHEBI:29105"/>
    </ligand>
</feature>
<feature type="binding site" evidence="1">
    <location>
        <position position="254"/>
    </location>
    <ligand>
        <name>4-imidazolone-5-propanoate</name>
        <dbReference type="ChEBI" id="CHEBI:77893"/>
    </ligand>
</feature>
<feature type="binding site" evidence="1">
    <location>
        <position position="325"/>
    </location>
    <ligand>
        <name>Fe(3+)</name>
        <dbReference type="ChEBI" id="CHEBI:29034"/>
    </ligand>
</feature>
<feature type="binding site" evidence="1">
    <location>
        <position position="325"/>
    </location>
    <ligand>
        <name>Zn(2+)</name>
        <dbReference type="ChEBI" id="CHEBI:29105"/>
    </ligand>
</feature>
<feature type="binding site" evidence="1">
    <location>
        <position position="327"/>
    </location>
    <ligand>
        <name>N-formimidoyl-L-glutamate</name>
        <dbReference type="ChEBI" id="CHEBI:58928"/>
    </ligand>
</feature>
<feature type="binding site" evidence="1">
    <location>
        <position position="329"/>
    </location>
    <ligand>
        <name>N-formimidoyl-L-glutamate</name>
        <dbReference type="ChEBI" id="CHEBI:58928"/>
    </ligand>
</feature>
<feature type="binding site" evidence="1">
    <location>
        <position position="330"/>
    </location>
    <ligand>
        <name>4-imidazolone-5-propanoate</name>
        <dbReference type="ChEBI" id="CHEBI:77893"/>
    </ligand>
</feature>